<accession>C1L2V3</accession>
<proteinExistence type="inferred from homology"/>
<name>CINA_LISMC</name>
<protein>
    <recommendedName>
        <fullName evidence="1">Putative competence-damage inducible protein</fullName>
    </recommendedName>
</protein>
<gene>
    <name evidence="1" type="primary">cinA</name>
    <name type="ordered locus">Lm4b_01406</name>
</gene>
<comment type="similarity">
    <text evidence="1">Belongs to the CinA family.</text>
</comment>
<feature type="chain" id="PRO_1000204329" description="Putative competence-damage inducible protein">
    <location>
        <begin position="1"/>
        <end position="414"/>
    </location>
</feature>
<evidence type="ECO:0000255" key="1">
    <source>
        <dbReference type="HAMAP-Rule" id="MF_00226"/>
    </source>
</evidence>
<reference key="1">
    <citation type="journal article" date="2012" name="BMC Genomics">
        <title>Comparative genomics and transcriptomics of lineages I, II, and III strains of Listeria monocytogenes.</title>
        <authorList>
            <person name="Hain T."/>
            <person name="Ghai R."/>
            <person name="Billion A."/>
            <person name="Kuenne C.T."/>
            <person name="Steinweg C."/>
            <person name="Izar B."/>
            <person name="Mohamed W."/>
            <person name="Mraheil M."/>
            <person name="Domann E."/>
            <person name="Schaffrath S."/>
            <person name="Karst U."/>
            <person name="Goesmann A."/>
            <person name="Oehm S."/>
            <person name="Puhler A."/>
            <person name="Merkl R."/>
            <person name="Vorwerk S."/>
            <person name="Glaser P."/>
            <person name="Garrido P."/>
            <person name="Rusniok C."/>
            <person name="Buchrieser C."/>
            <person name="Goebel W."/>
            <person name="Chakraborty T."/>
        </authorList>
    </citation>
    <scope>NUCLEOTIDE SEQUENCE [LARGE SCALE GENOMIC DNA]</scope>
    <source>
        <strain>CLIP80459</strain>
    </source>
</reference>
<dbReference type="EMBL" id="FM242711">
    <property type="protein sequence ID" value="CAS05169.1"/>
    <property type="molecule type" value="Genomic_DNA"/>
</dbReference>
<dbReference type="RefSeq" id="WP_003725960.1">
    <property type="nucleotide sequence ID" value="NC_012488.1"/>
</dbReference>
<dbReference type="SMR" id="C1L2V3"/>
<dbReference type="KEGG" id="lmc:Lm4b_01406"/>
<dbReference type="HOGENOM" id="CLU_030805_9_3_9"/>
<dbReference type="CDD" id="cd00885">
    <property type="entry name" value="cinA"/>
    <property type="match status" value="1"/>
</dbReference>
<dbReference type="Gene3D" id="3.90.950.20">
    <property type="entry name" value="CinA-like"/>
    <property type="match status" value="1"/>
</dbReference>
<dbReference type="Gene3D" id="3.40.980.10">
    <property type="entry name" value="MoaB/Mog-like domain"/>
    <property type="match status" value="1"/>
</dbReference>
<dbReference type="HAMAP" id="MF_00226_B">
    <property type="entry name" value="CinA_B"/>
    <property type="match status" value="1"/>
</dbReference>
<dbReference type="InterPro" id="IPR050101">
    <property type="entry name" value="CinA"/>
</dbReference>
<dbReference type="InterPro" id="IPR036653">
    <property type="entry name" value="CinA-like_C"/>
</dbReference>
<dbReference type="InterPro" id="IPR008136">
    <property type="entry name" value="CinA_C"/>
</dbReference>
<dbReference type="InterPro" id="IPR041424">
    <property type="entry name" value="CinA_KH"/>
</dbReference>
<dbReference type="InterPro" id="IPR008135">
    <property type="entry name" value="Competence-induced_CinA"/>
</dbReference>
<dbReference type="InterPro" id="IPR036425">
    <property type="entry name" value="MoaB/Mog-like_dom_sf"/>
</dbReference>
<dbReference type="InterPro" id="IPR001453">
    <property type="entry name" value="MoaB/Mog_dom"/>
</dbReference>
<dbReference type="NCBIfam" id="TIGR00200">
    <property type="entry name" value="cinA_nterm"/>
    <property type="match status" value="1"/>
</dbReference>
<dbReference type="NCBIfam" id="TIGR00177">
    <property type="entry name" value="molyb_syn"/>
    <property type="match status" value="1"/>
</dbReference>
<dbReference type="NCBIfam" id="TIGR00199">
    <property type="entry name" value="PncC_domain"/>
    <property type="match status" value="1"/>
</dbReference>
<dbReference type="NCBIfam" id="NF001813">
    <property type="entry name" value="PRK00549.1"/>
    <property type="match status" value="1"/>
</dbReference>
<dbReference type="PANTHER" id="PTHR13939">
    <property type="entry name" value="NICOTINAMIDE-NUCLEOTIDE AMIDOHYDROLASE PNCC"/>
    <property type="match status" value="1"/>
</dbReference>
<dbReference type="PANTHER" id="PTHR13939:SF0">
    <property type="entry name" value="NMN AMIDOHYDROLASE-LIKE PROTEIN YFAY"/>
    <property type="match status" value="1"/>
</dbReference>
<dbReference type="Pfam" id="PF02464">
    <property type="entry name" value="CinA"/>
    <property type="match status" value="1"/>
</dbReference>
<dbReference type="Pfam" id="PF18146">
    <property type="entry name" value="CinA_KH"/>
    <property type="match status" value="1"/>
</dbReference>
<dbReference type="Pfam" id="PF00994">
    <property type="entry name" value="MoCF_biosynth"/>
    <property type="match status" value="1"/>
</dbReference>
<dbReference type="PIRSF" id="PIRSF006728">
    <property type="entry name" value="CinA"/>
    <property type="match status" value="1"/>
</dbReference>
<dbReference type="SMART" id="SM00852">
    <property type="entry name" value="MoCF_biosynth"/>
    <property type="match status" value="1"/>
</dbReference>
<dbReference type="SUPFAM" id="SSF142433">
    <property type="entry name" value="CinA-like"/>
    <property type="match status" value="1"/>
</dbReference>
<dbReference type="SUPFAM" id="SSF53218">
    <property type="entry name" value="Molybdenum cofactor biosynthesis proteins"/>
    <property type="match status" value="1"/>
</dbReference>
<organism>
    <name type="scientific">Listeria monocytogenes serotype 4b (strain CLIP80459)</name>
    <dbReference type="NCBI Taxonomy" id="568819"/>
    <lineage>
        <taxon>Bacteria</taxon>
        <taxon>Bacillati</taxon>
        <taxon>Bacillota</taxon>
        <taxon>Bacilli</taxon>
        <taxon>Bacillales</taxon>
        <taxon>Listeriaceae</taxon>
        <taxon>Listeria</taxon>
    </lineage>
</organism>
<sequence>MASAEIIAVGTELLLGQIVNSNAAFISQELAADGIYVYHHTVVGDNPTRLKEVIEIAENRSDILIFTGGLGPTEDDITKQILAAHLQKQLVEDEYHMNKINEYFTSRNRTMTENNKLQAVIIEDSIVLNNDFGFAAGMYLRENNHTYVLLPGPPSEMKPMFTSYANPLLLSESGDQNILESKIMRFFGIGESQLAADLNDLIVTQVNPTIATYAGDNEVVVRITATAKTKEEASRLVKETEEEILRREGTFLYGYGEVSLSELVTAMLLEKELTISAAESFTAGLFQAEIARFPGISKIFKGGMVTYSEETKQSILQVSPQVIKEKGVVSAECAKEMAENVSRLCKTDIGISFTGVAGPDSLEGHPAGTIWIGLSVKGYETEAFQFVYGRDRNHNRRRAVKQGFQLIKQFLDAN</sequence>